<reference key="1">
    <citation type="journal article" date="2004" name="Proc. Natl. Acad. Sci. U.S.A.">
        <title>Genomic plasticity of the causative agent of melioidosis, Burkholderia pseudomallei.</title>
        <authorList>
            <person name="Holden M.T.G."/>
            <person name="Titball R.W."/>
            <person name="Peacock S.J."/>
            <person name="Cerdeno-Tarraga A.-M."/>
            <person name="Atkins T."/>
            <person name="Crossman L.C."/>
            <person name="Pitt T."/>
            <person name="Churcher C."/>
            <person name="Mungall K.L."/>
            <person name="Bentley S.D."/>
            <person name="Sebaihia M."/>
            <person name="Thomson N.R."/>
            <person name="Bason N."/>
            <person name="Beacham I.R."/>
            <person name="Brooks K."/>
            <person name="Brown K.A."/>
            <person name="Brown N.F."/>
            <person name="Challis G.L."/>
            <person name="Cherevach I."/>
            <person name="Chillingworth T."/>
            <person name="Cronin A."/>
            <person name="Crossett B."/>
            <person name="Davis P."/>
            <person name="DeShazer D."/>
            <person name="Feltwell T."/>
            <person name="Fraser A."/>
            <person name="Hance Z."/>
            <person name="Hauser H."/>
            <person name="Holroyd S."/>
            <person name="Jagels K."/>
            <person name="Keith K.E."/>
            <person name="Maddison M."/>
            <person name="Moule S."/>
            <person name="Price C."/>
            <person name="Quail M.A."/>
            <person name="Rabbinowitsch E."/>
            <person name="Rutherford K."/>
            <person name="Sanders M."/>
            <person name="Simmonds M."/>
            <person name="Songsivilai S."/>
            <person name="Stevens K."/>
            <person name="Tumapa S."/>
            <person name="Vesaratchavest M."/>
            <person name="Whitehead S."/>
            <person name="Yeats C."/>
            <person name="Barrell B.G."/>
            <person name="Oyston P.C.F."/>
            <person name="Parkhill J."/>
        </authorList>
    </citation>
    <scope>NUCLEOTIDE SEQUENCE [LARGE SCALE GENOMIC DNA]</scope>
    <source>
        <strain>K96243</strain>
    </source>
</reference>
<feature type="chain" id="PRO_0000269798" description="Pyridoxal kinase PdxY">
    <location>
        <begin position="1"/>
        <end position="287"/>
    </location>
</feature>
<feature type="binding site" evidence="1">
    <location>
        <position position="9"/>
    </location>
    <ligand>
        <name>substrate</name>
    </ligand>
</feature>
<feature type="binding site" evidence="1">
    <location>
        <begin position="44"/>
        <end position="45"/>
    </location>
    <ligand>
        <name>substrate</name>
    </ligand>
</feature>
<feature type="binding site" evidence="1">
    <location>
        <position position="111"/>
    </location>
    <ligand>
        <name>ATP</name>
        <dbReference type="ChEBI" id="CHEBI:30616"/>
    </ligand>
</feature>
<feature type="binding site" evidence="1">
    <location>
        <position position="142"/>
    </location>
    <ligand>
        <name>ATP</name>
        <dbReference type="ChEBI" id="CHEBI:30616"/>
    </ligand>
</feature>
<feature type="binding site" evidence="1">
    <location>
        <position position="147"/>
    </location>
    <ligand>
        <name>ATP</name>
        <dbReference type="ChEBI" id="CHEBI:30616"/>
    </ligand>
</feature>
<feature type="binding site" evidence="1">
    <location>
        <position position="180"/>
    </location>
    <ligand>
        <name>ATP</name>
        <dbReference type="ChEBI" id="CHEBI:30616"/>
    </ligand>
</feature>
<feature type="binding site" evidence="1">
    <location>
        <position position="221"/>
    </location>
    <ligand>
        <name>substrate</name>
    </ligand>
</feature>
<name>PDXY_BURPS</name>
<accession>Q63SC2</accession>
<keyword id="KW-0067">ATP-binding</keyword>
<keyword id="KW-0418">Kinase</keyword>
<keyword id="KW-0460">Magnesium</keyword>
<keyword id="KW-0547">Nucleotide-binding</keyword>
<keyword id="KW-1185">Reference proteome</keyword>
<keyword id="KW-0808">Transferase</keyword>
<dbReference type="EC" id="2.7.1.35" evidence="1"/>
<dbReference type="EMBL" id="BX571965">
    <property type="protein sequence ID" value="CAH36404.1"/>
    <property type="molecule type" value="Genomic_DNA"/>
</dbReference>
<dbReference type="RefSeq" id="WP_004193025.1">
    <property type="nucleotide sequence ID" value="NZ_CP009538.1"/>
</dbReference>
<dbReference type="RefSeq" id="YP_108994.1">
    <property type="nucleotide sequence ID" value="NC_006350.1"/>
</dbReference>
<dbReference type="SMR" id="Q63SC2"/>
<dbReference type="STRING" id="272560.BPSL2402"/>
<dbReference type="KEGG" id="bps:BPSL2402"/>
<dbReference type="PATRIC" id="fig|272560.51.peg.2996"/>
<dbReference type="eggNOG" id="COG2240">
    <property type="taxonomic scope" value="Bacteria"/>
</dbReference>
<dbReference type="UniPathway" id="UPA01068">
    <property type="reaction ID" value="UER00298"/>
</dbReference>
<dbReference type="Proteomes" id="UP000000605">
    <property type="component" value="Chromosome 1"/>
</dbReference>
<dbReference type="GO" id="GO:0005829">
    <property type="term" value="C:cytosol"/>
    <property type="evidence" value="ECO:0007669"/>
    <property type="project" value="TreeGrafter"/>
</dbReference>
<dbReference type="GO" id="GO:0005524">
    <property type="term" value="F:ATP binding"/>
    <property type="evidence" value="ECO:0007669"/>
    <property type="project" value="UniProtKB-UniRule"/>
</dbReference>
<dbReference type="GO" id="GO:0000287">
    <property type="term" value="F:magnesium ion binding"/>
    <property type="evidence" value="ECO:0007669"/>
    <property type="project" value="UniProtKB-UniRule"/>
</dbReference>
<dbReference type="GO" id="GO:0008478">
    <property type="term" value="F:pyridoxal kinase activity"/>
    <property type="evidence" value="ECO:0007669"/>
    <property type="project" value="UniProtKB-UniRule"/>
</dbReference>
<dbReference type="GO" id="GO:0009443">
    <property type="term" value="P:pyridoxal 5'-phosphate salvage"/>
    <property type="evidence" value="ECO:0007669"/>
    <property type="project" value="UniProtKB-UniRule"/>
</dbReference>
<dbReference type="CDD" id="cd01173">
    <property type="entry name" value="pyridoxal_pyridoxamine_kinase"/>
    <property type="match status" value="1"/>
</dbReference>
<dbReference type="FunFam" id="3.40.1190.20:FF:000008">
    <property type="entry name" value="Pyridoxal kinase PdxY"/>
    <property type="match status" value="1"/>
</dbReference>
<dbReference type="Gene3D" id="3.40.1190.20">
    <property type="match status" value="1"/>
</dbReference>
<dbReference type="HAMAP" id="MF_01639">
    <property type="entry name" value="PdxY"/>
    <property type="match status" value="1"/>
</dbReference>
<dbReference type="InterPro" id="IPR013749">
    <property type="entry name" value="PM/HMP-P_kinase-1"/>
</dbReference>
<dbReference type="InterPro" id="IPR004625">
    <property type="entry name" value="PyrdxlKinase"/>
</dbReference>
<dbReference type="InterPro" id="IPR023685">
    <property type="entry name" value="Pyridoxal_kinase_PdxY"/>
</dbReference>
<dbReference type="InterPro" id="IPR029056">
    <property type="entry name" value="Ribokinase-like"/>
</dbReference>
<dbReference type="NCBIfam" id="NF004398">
    <property type="entry name" value="PRK05756.1"/>
    <property type="match status" value="1"/>
</dbReference>
<dbReference type="NCBIfam" id="TIGR00687">
    <property type="entry name" value="pyridox_kin"/>
    <property type="match status" value="1"/>
</dbReference>
<dbReference type="PANTHER" id="PTHR10534">
    <property type="entry name" value="PYRIDOXAL KINASE"/>
    <property type="match status" value="1"/>
</dbReference>
<dbReference type="PANTHER" id="PTHR10534:SF2">
    <property type="entry name" value="PYRIDOXAL KINASE"/>
    <property type="match status" value="1"/>
</dbReference>
<dbReference type="Pfam" id="PF08543">
    <property type="entry name" value="Phos_pyr_kin"/>
    <property type="match status" value="1"/>
</dbReference>
<dbReference type="SUPFAM" id="SSF53613">
    <property type="entry name" value="Ribokinase-like"/>
    <property type="match status" value="1"/>
</dbReference>
<evidence type="ECO:0000255" key="1">
    <source>
        <dbReference type="HAMAP-Rule" id="MF_01639"/>
    </source>
</evidence>
<protein>
    <recommendedName>
        <fullName evidence="1">Pyridoxal kinase PdxY</fullName>
        <shortName evidence="1">PL kinase</shortName>
        <ecNumber evidence="1">2.7.1.35</ecNumber>
    </recommendedName>
</protein>
<gene>
    <name evidence="1" type="primary">pdxY</name>
    <name type="ordered locus">BPSL2402</name>
</gene>
<comment type="function">
    <text evidence="1">Pyridoxal kinase involved in the salvage pathway of pyridoxal 5'-phosphate (PLP). Catalyzes the phosphorylation of pyridoxal to PLP.</text>
</comment>
<comment type="catalytic activity">
    <reaction evidence="1">
        <text>pyridoxal + ATP = pyridoxal 5'-phosphate + ADP + H(+)</text>
        <dbReference type="Rhea" id="RHEA:10224"/>
        <dbReference type="ChEBI" id="CHEBI:15378"/>
        <dbReference type="ChEBI" id="CHEBI:17310"/>
        <dbReference type="ChEBI" id="CHEBI:30616"/>
        <dbReference type="ChEBI" id="CHEBI:456216"/>
        <dbReference type="ChEBI" id="CHEBI:597326"/>
        <dbReference type="EC" id="2.7.1.35"/>
    </reaction>
</comment>
<comment type="cofactor">
    <cofactor evidence="1">
        <name>Mg(2+)</name>
        <dbReference type="ChEBI" id="CHEBI:18420"/>
    </cofactor>
</comment>
<comment type="pathway">
    <text evidence="1">Cofactor metabolism; pyridoxal 5'-phosphate salvage; pyridoxal 5'-phosphate from pyridoxal: step 1/1.</text>
</comment>
<comment type="subunit">
    <text evidence="1">Homodimer.</text>
</comment>
<comment type="similarity">
    <text evidence="1">Belongs to the pyridoxine kinase family. PdxY subfamily.</text>
</comment>
<organism>
    <name type="scientific">Burkholderia pseudomallei (strain K96243)</name>
    <dbReference type="NCBI Taxonomy" id="272560"/>
    <lineage>
        <taxon>Bacteria</taxon>
        <taxon>Pseudomonadati</taxon>
        <taxon>Pseudomonadota</taxon>
        <taxon>Betaproteobacteria</taxon>
        <taxon>Burkholderiales</taxon>
        <taxon>Burkholderiaceae</taxon>
        <taxon>Burkholderia</taxon>
        <taxon>pseudomallei group</taxon>
    </lineage>
</organism>
<sequence>MKNVLSIQSHVIYGHAGNSAAVFPMQRLGVNVWPLNTVQLSNHMQYGHWAGSAIDAAKMEQLVDGIAAIGALKRCDAVLSGFLGSPAQARAAVEIVRTVKATNPNAWYFCDPAMGQTGGIRPEPGVEEFIVAELPELADGMAPNHSELQKLAGQRIETVAEAVAACRSIIRRGPQVILVKHLHDRNSPADRFNMLVVTETEAWIGQRPLYAFPRHPVGVGDLTSAIFVARRLRGDSVRAAFEHTLAAVHAVVKATYDARRYELELVAAQDEIARPSEWFGAWVTGAD</sequence>
<proteinExistence type="inferred from homology"/>